<reference key="1">
    <citation type="journal article" date="2009" name="Stand. Genomic Sci.">
        <title>Complete genome sequence of Methanoculleus marisnigri Romesser et al. 1981 type strain JR1.</title>
        <authorList>
            <person name="Anderson I.J."/>
            <person name="Sieprawska-Lupa M."/>
            <person name="Lapidus A."/>
            <person name="Nolan M."/>
            <person name="Copeland A."/>
            <person name="Glavina Del Rio T."/>
            <person name="Tice H."/>
            <person name="Dalin E."/>
            <person name="Barry K."/>
            <person name="Saunders E."/>
            <person name="Han C."/>
            <person name="Brettin T."/>
            <person name="Detter J.C."/>
            <person name="Bruce D."/>
            <person name="Mikhailova N."/>
            <person name="Pitluck S."/>
            <person name="Hauser L."/>
            <person name="Land M."/>
            <person name="Lucas S."/>
            <person name="Richardson P."/>
            <person name="Whitman W.B."/>
            <person name="Kyrpides N.C."/>
        </authorList>
    </citation>
    <scope>NUCLEOTIDE SEQUENCE [LARGE SCALE GENOMIC DNA]</scope>
    <source>
        <strain>ATCC 35101 / DSM 1498 / JR1</strain>
    </source>
</reference>
<evidence type="ECO:0000255" key="1">
    <source>
        <dbReference type="HAMAP-Rule" id="MF_00137"/>
    </source>
</evidence>
<sequence length="241" mass="27297">MKQVDLLYTGKAKSVYRTDDPEVYIMKFRDDITAFDGEKKDTLEGKGRYNAEVSTFIFRYLEEHGIRTHYLASIESGVIAVRNLTMIPLEVIVRNVAAGSIVRNYPFREGEPLDPPLIVIDYKSDAHHDPMLNDELIYALGLATPEELDQIKAMALAINELLSDYLDLRGITLVDFKMEFGRYNGEIVVGDEISMDSMRLWDKETGTSLDKDVYRFGKGDVMETYAGVAKRILSPPWGEPA</sequence>
<gene>
    <name evidence="1" type="primary">purC</name>
    <name type="ordered locus">Memar_1839</name>
</gene>
<name>PUR7_METMJ</name>
<accession>A3CWL5</accession>
<comment type="catalytic activity">
    <reaction evidence="1">
        <text>5-amino-1-(5-phospho-D-ribosyl)imidazole-4-carboxylate + L-aspartate + ATP = (2S)-2-[5-amino-1-(5-phospho-beta-D-ribosyl)imidazole-4-carboxamido]succinate + ADP + phosphate + 2 H(+)</text>
        <dbReference type="Rhea" id="RHEA:22628"/>
        <dbReference type="ChEBI" id="CHEBI:15378"/>
        <dbReference type="ChEBI" id="CHEBI:29991"/>
        <dbReference type="ChEBI" id="CHEBI:30616"/>
        <dbReference type="ChEBI" id="CHEBI:43474"/>
        <dbReference type="ChEBI" id="CHEBI:58443"/>
        <dbReference type="ChEBI" id="CHEBI:77657"/>
        <dbReference type="ChEBI" id="CHEBI:456216"/>
        <dbReference type="EC" id="6.3.2.6"/>
    </reaction>
</comment>
<comment type="pathway">
    <text evidence="1">Purine metabolism; IMP biosynthesis via de novo pathway; 5-amino-1-(5-phospho-D-ribosyl)imidazole-4-carboxamide from 5-amino-1-(5-phospho-D-ribosyl)imidazole-4-carboxylate: step 1/2.</text>
</comment>
<comment type="similarity">
    <text evidence="1">Belongs to the SAICAR synthetase family.</text>
</comment>
<keyword id="KW-0067">ATP-binding</keyword>
<keyword id="KW-0436">Ligase</keyword>
<keyword id="KW-0547">Nucleotide-binding</keyword>
<keyword id="KW-0658">Purine biosynthesis</keyword>
<proteinExistence type="inferred from homology"/>
<protein>
    <recommendedName>
        <fullName evidence="1">Phosphoribosylaminoimidazole-succinocarboxamide synthase</fullName>
        <ecNumber evidence="1">6.3.2.6</ecNumber>
    </recommendedName>
    <alternativeName>
        <fullName evidence="1">SAICAR synthetase</fullName>
    </alternativeName>
</protein>
<organism>
    <name type="scientific">Methanoculleus marisnigri (strain ATCC 35101 / DSM 1498 / JR1)</name>
    <dbReference type="NCBI Taxonomy" id="368407"/>
    <lineage>
        <taxon>Archaea</taxon>
        <taxon>Methanobacteriati</taxon>
        <taxon>Methanobacteriota</taxon>
        <taxon>Stenosarchaea group</taxon>
        <taxon>Methanomicrobia</taxon>
        <taxon>Methanomicrobiales</taxon>
        <taxon>Methanomicrobiaceae</taxon>
        <taxon>Methanoculleus</taxon>
    </lineage>
</organism>
<dbReference type="EC" id="6.3.2.6" evidence="1"/>
<dbReference type="EMBL" id="CP000562">
    <property type="protein sequence ID" value="ABN57765.1"/>
    <property type="molecule type" value="Genomic_DNA"/>
</dbReference>
<dbReference type="RefSeq" id="WP_011844674.1">
    <property type="nucleotide sequence ID" value="NC_009051.1"/>
</dbReference>
<dbReference type="SMR" id="A3CWL5"/>
<dbReference type="STRING" id="368407.Memar_1839"/>
<dbReference type="GeneID" id="4847005"/>
<dbReference type="GeneID" id="76729915"/>
<dbReference type="KEGG" id="mem:Memar_1839"/>
<dbReference type="eggNOG" id="arCOG04421">
    <property type="taxonomic scope" value="Archaea"/>
</dbReference>
<dbReference type="HOGENOM" id="CLU_061495_2_0_2"/>
<dbReference type="OrthoDB" id="10775at2157"/>
<dbReference type="UniPathway" id="UPA00074">
    <property type="reaction ID" value="UER00131"/>
</dbReference>
<dbReference type="Proteomes" id="UP000002146">
    <property type="component" value="Chromosome"/>
</dbReference>
<dbReference type="GO" id="GO:0005524">
    <property type="term" value="F:ATP binding"/>
    <property type="evidence" value="ECO:0007669"/>
    <property type="project" value="UniProtKB-KW"/>
</dbReference>
<dbReference type="GO" id="GO:0004639">
    <property type="term" value="F:phosphoribosylaminoimidazolesuccinocarboxamide synthase activity"/>
    <property type="evidence" value="ECO:0007669"/>
    <property type="project" value="UniProtKB-UniRule"/>
</dbReference>
<dbReference type="GO" id="GO:0006189">
    <property type="term" value="P:'de novo' IMP biosynthetic process"/>
    <property type="evidence" value="ECO:0007669"/>
    <property type="project" value="UniProtKB-UniRule"/>
</dbReference>
<dbReference type="GO" id="GO:0009236">
    <property type="term" value="P:cobalamin biosynthetic process"/>
    <property type="evidence" value="ECO:0007669"/>
    <property type="project" value="InterPro"/>
</dbReference>
<dbReference type="CDD" id="cd01415">
    <property type="entry name" value="SAICAR_synt_PurC"/>
    <property type="match status" value="1"/>
</dbReference>
<dbReference type="FunFam" id="3.30.470.20:FF:000006">
    <property type="entry name" value="Phosphoribosylaminoimidazole-succinocarboxamide synthase"/>
    <property type="match status" value="1"/>
</dbReference>
<dbReference type="Gene3D" id="3.30.470.20">
    <property type="entry name" value="ATP-grasp fold, B domain"/>
    <property type="match status" value="1"/>
</dbReference>
<dbReference type="Gene3D" id="3.30.200.20">
    <property type="entry name" value="Phosphorylase Kinase, domain 1"/>
    <property type="match status" value="1"/>
</dbReference>
<dbReference type="HAMAP" id="MF_00137">
    <property type="entry name" value="SAICAR_synth"/>
    <property type="match status" value="1"/>
</dbReference>
<dbReference type="InterPro" id="IPR028923">
    <property type="entry name" value="SAICAR_synt/ADE2_N"/>
</dbReference>
<dbReference type="InterPro" id="IPR033934">
    <property type="entry name" value="SAICAR_synt_PurC"/>
</dbReference>
<dbReference type="InterPro" id="IPR001636">
    <property type="entry name" value="SAICAR_synth"/>
</dbReference>
<dbReference type="InterPro" id="IPR050089">
    <property type="entry name" value="SAICAR_synthetase"/>
</dbReference>
<dbReference type="InterPro" id="IPR018236">
    <property type="entry name" value="SAICAR_synthetase_CS"/>
</dbReference>
<dbReference type="NCBIfam" id="TIGR00081">
    <property type="entry name" value="purC"/>
    <property type="match status" value="1"/>
</dbReference>
<dbReference type="PANTHER" id="PTHR43599">
    <property type="entry name" value="MULTIFUNCTIONAL PROTEIN ADE2"/>
    <property type="match status" value="1"/>
</dbReference>
<dbReference type="PANTHER" id="PTHR43599:SF3">
    <property type="entry name" value="SI:DKEY-6E2.2"/>
    <property type="match status" value="1"/>
</dbReference>
<dbReference type="Pfam" id="PF01259">
    <property type="entry name" value="SAICAR_synt"/>
    <property type="match status" value="1"/>
</dbReference>
<dbReference type="SUPFAM" id="SSF56104">
    <property type="entry name" value="SAICAR synthase-like"/>
    <property type="match status" value="1"/>
</dbReference>
<dbReference type="PROSITE" id="PS01057">
    <property type="entry name" value="SAICAR_SYNTHETASE_1"/>
    <property type="match status" value="1"/>
</dbReference>
<feature type="chain" id="PRO_1000018732" description="Phosphoribosylaminoimidazole-succinocarboxamide synthase">
    <location>
        <begin position="1"/>
        <end position="241"/>
    </location>
</feature>